<evidence type="ECO:0000255" key="1">
    <source>
        <dbReference type="PROSITE-ProRule" id="PRU00388"/>
    </source>
</evidence>
<evidence type="ECO:0000255" key="2">
    <source>
        <dbReference type="PROSITE-ProRule" id="PRU10133"/>
    </source>
</evidence>
<evidence type="ECO:0000269" key="3">
    <source>
    </source>
</evidence>
<evidence type="ECO:0000269" key="4">
    <source>
    </source>
</evidence>
<evidence type="ECO:0000269" key="5">
    <source>
    </source>
</evidence>
<evidence type="ECO:0000303" key="6">
    <source>
    </source>
</evidence>
<evidence type="ECO:0000303" key="7">
    <source>
    </source>
</evidence>
<evidence type="ECO:0000305" key="8"/>
<sequence length="204" mass="23566">MSAEKRLLQEYRSILKEQRQKGSASTLSSNGILDLKPVSEDNFYKWTAKLKGPTDTGYQDAFWELQIDIPSNYPTQPPKFTFIVSDDIPRNRRQRQTNQIQDDDEFEGAEKEVLRHCYRMPHPNIAFNTGEICLDILQAKWTPAWTLSSALTAIVLLLNDPEPLSPLDIDMANLMKINDLKAYNSLIEYYVGRYSIEEEVYILN</sequence>
<reference key="1">
    <citation type="journal article" date="2009" name="Nat. Biotechnol.">
        <title>Genome sequence of the recombinant protein production host Pichia pastoris.</title>
        <authorList>
            <person name="De Schutter K."/>
            <person name="Lin Y.-C."/>
            <person name="Tiels P."/>
            <person name="Van Hecke A."/>
            <person name="Glinka S."/>
            <person name="Weber-Lehmann J."/>
            <person name="Rouze P."/>
            <person name="Van de Peer Y."/>
            <person name="Callewaert N."/>
        </authorList>
    </citation>
    <scope>NUCLEOTIDE SEQUENCE [LARGE SCALE GENOMIC DNA]</scope>
    <source>
        <strain>GS115 / ATCC 20864</strain>
    </source>
</reference>
<reference key="2">
    <citation type="journal article" date="1994" name="J. Biol. Chem.">
        <title>The Pichia pastoris PAS4 gene encodes a ubiquitin-conjugating enzyme required for peroxisome assembly.</title>
        <authorList>
            <person name="Crane D.I."/>
            <person name="Kalish J.E."/>
            <person name="Gould S.J."/>
        </authorList>
    </citation>
    <scope>FUNCTION</scope>
    <scope>MUTAGENESIS OF CYS-133</scope>
    <scope>SUBCELLULAR LOCATION</scope>
</reference>
<reference key="3">
    <citation type="journal article" date="2000" name="Mol. Cell. Biol.">
        <title>The peroxisome biogenesis factors pex4p, pex22p, pex1p, and pex6p act in the terminal steps of peroxisomal matrix protein import.</title>
        <authorList>
            <person name="Collins C.S."/>
            <person name="Kalish J.E."/>
            <person name="Morrell J.C."/>
            <person name="McCaffery J.M."/>
            <person name="Gould S.J."/>
        </authorList>
    </citation>
    <scope>FUNCTION</scope>
    <scope>DISRUPTION PHENOTYPE</scope>
    <scope>MUTAGENESIS OF CYS-133</scope>
</reference>
<reference key="4">
    <citation type="journal article" date="2013" name="J. Biol. Chem.">
        <title>Unique requirements for mono- and polyubiquitination of the peroxisomal targeting signal co-receptor, Pex20.</title>
        <authorList>
            <person name="Liu X."/>
            <person name="Subramani S."/>
        </authorList>
    </citation>
    <scope>FUNCTION</scope>
    <scope>CATALYTIC ACTIVITY</scope>
</reference>
<accession>C4R826</accession>
<keyword id="KW-0067">ATP-binding</keyword>
<keyword id="KW-0472">Membrane</keyword>
<keyword id="KW-0547">Nucleotide-binding</keyword>
<keyword id="KW-0576">Peroxisome</keyword>
<keyword id="KW-0962">Peroxisome biogenesis</keyword>
<keyword id="KW-1185">Reference proteome</keyword>
<keyword id="KW-0808">Transferase</keyword>
<keyword id="KW-0833">Ubl conjugation pathway</keyword>
<gene>
    <name evidence="6" type="primary">PEX4</name>
    <name evidence="7" type="synonym">PAS4</name>
    <name type="ordered locus">PAS_chr4_0496</name>
</gene>
<feature type="chain" id="PRO_0000461163" description="E2 ubiquitin-conjugating enzyme PEX4">
    <location>
        <begin position="1"/>
        <end position="204"/>
    </location>
</feature>
<feature type="domain" description="UBC core" evidence="1">
    <location>
        <begin position="2"/>
        <end position="196"/>
    </location>
</feature>
<feature type="active site" description="Glycyl thioester intermediate" evidence="2">
    <location>
        <position position="133"/>
    </location>
</feature>
<proteinExistence type="evidence at protein level"/>
<dbReference type="EC" id="2.3.2.23" evidence="4"/>
<dbReference type="EMBL" id="FN392322">
    <property type="protein sequence ID" value="CAY71751.1"/>
    <property type="molecule type" value="Genomic_DNA"/>
</dbReference>
<dbReference type="RefSeq" id="XP_002493930.1">
    <property type="nucleotide sequence ID" value="XM_002493885.1"/>
</dbReference>
<dbReference type="SMR" id="C4R826"/>
<dbReference type="FunCoup" id="C4R826">
    <property type="interactions" value="87"/>
</dbReference>
<dbReference type="STRING" id="644223.C4R826"/>
<dbReference type="EnsemblFungi" id="CAY71751">
    <property type="protein sequence ID" value="CAY71751"/>
    <property type="gene ID" value="PAS_chr4_0496"/>
</dbReference>
<dbReference type="GeneID" id="8201441"/>
<dbReference type="KEGG" id="ppa:PAS_chr4_0496"/>
<dbReference type="eggNOG" id="KOG0417">
    <property type="taxonomic scope" value="Eukaryota"/>
</dbReference>
<dbReference type="HOGENOM" id="CLU_030988_13_0_1"/>
<dbReference type="InParanoid" id="C4R826"/>
<dbReference type="OMA" id="WRAVMKG"/>
<dbReference type="OrthoDB" id="9973183at2759"/>
<dbReference type="UniPathway" id="UPA00143"/>
<dbReference type="Proteomes" id="UP000000314">
    <property type="component" value="Chromosome 4"/>
</dbReference>
<dbReference type="GO" id="GO:0005778">
    <property type="term" value="C:peroxisomal membrane"/>
    <property type="evidence" value="ECO:0007669"/>
    <property type="project" value="UniProtKB-SubCell"/>
</dbReference>
<dbReference type="GO" id="GO:0005524">
    <property type="term" value="F:ATP binding"/>
    <property type="evidence" value="ECO:0007669"/>
    <property type="project" value="UniProtKB-KW"/>
</dbReference>
<dbReference type="GO" id="GO:0016740">
    <property type="term" value="F:transferase activity"/>
    <property type="evidence" value="ECO:0007669"/>
    <property type="project" value="UniProtKB-KW"/>
</dbReference>
<dbReference type="GO" id="GO:0007031">
    <property type="term" value="P:peroxisome organization"/>
    <property type="evidence" value="ECO:0007669"/>
    <property type="project" value="UniProtKB-KW"/>
</dbReference>
<dbReference type="CDD" id="cd23812">
    <property type="entry name" value="UBCc_ScPEX4-like"/>
    <property type="match status" value="1"/>
</dbReference>
<dbReference type="Gene3D" id="3.10.110.10">
    <property type="entry name" value="Ubiquitin Conjugating Enzyme"/>
    <property type="match status" value="1"/>
</dbReference>
<dbReference type="InterPro" id="IPR050113">
    <property type="entry name" value="Ub_conjugating_enzyme"/>
</dbReference>
<dbReference type="InterPro" id="IPR000608">
    <property type="entry name" value="UBQ-conjugat_E2_core"/>
</dbReference>
<dbReference type="InterPro" id="IPR023313">
    <property type="entry name" value="UBQ-conjugating_AS"/>
</dbReference>
<dbReference type="InterPro" id="IPR016135">
    <property type="entry name" value="UBQ-conjugating_enzyme/RWD"/>
</dbReference>
<dbReference type="PANTHER" id="PTHR24067">
    <property type="entry name" value="UBIQUITIN-CONJUGATING ENZYME E2"/>
    <property type="match status" value="1"/>
</dbReference>
<dbReference type="Pfam" id="PF00179">
    <property type="entry name" value="UQ_con"/>
    <property type="match status" value="1"/>
</dbReference>
<dbReference type="SMART" id="SM00212">
    <property type="entry name" value="UBCc"/>
    <property type="match status" value="1"/>
</dbReference>
<dbReference type="SUPFAM" id="SSF54495">
    <property type="entry name" value="UBC-like"/>
    <property type="match status" value="1"/>
</dbReference>
<dbReference type="PROSITE" id="PS00183">
    <property type="entry name" value="UBC_1"/>
    <property type="match status" value="1"/>
</dbReference>
<dbReference type="PROSITE" id="PS50127">
    <property type="entry name" value="UBC_2"/>
    <property type="match status" value="1"/>
</dbReference>
<protein>
    <recommendedName>
        <fullName evidence="6">E2 ubiquitin-conjugating enzyme PEX4</fullName>
        <ecNumber evidence="4">2.3.2.23</ecNumber>
    </recommendedName>
    <alternativeName>
        <fullName evidence="6">Peroxin-4</fullName>
    </alternativeName>
</protein>
<organism>
    <name type="scientific">Komagataella phaffii (strain GS115 / ATCC 20864)</name>
    <name type="common">Yeast</name>
    <name type="synonym">Pichia pastoris</name>
    <dbReference type="NCBI Taxonomy" id="644223"/>
    <lineage>
        <taxon>Eukaryota</taxon>
        <taxon>Fungi</taxon>
        <taxon>Dikarya</taxon>
        <taxon>Ascomycota</taxon>
        <taxon>Saccharomycotina</taxon>
        <taxon>Pichiomycetes</taxon>
        <taxon>Pichiales</taxon>
        <taxon>Pichiaceae</taxon>
        <taxon>Komagataella</taxon>
    </lineage>
</organism>
<comment type="function">
    <text evidence="3 4 5">E2 ubiquitin-conjugating enzyme involved in peroxisome biosynthesis (PubMed:11003648, PubMed:8063827). Acts late in peroxisomal matrix protein import, after matrix protein translocation (PubMed:11003648). Required for both monoubiquitination and polyubiquitination of coreceptor PEX20 (PubMed:11003648). polyubiquitination of PEX20 at conserved lysine 'Lys-19' near the N-terminus leads to its and proteasomal degradation, whereas a monoubiquitination at the conserved cysteine 'Cys-8' is essential for its recycling (PubMed:23344950).</text>
</comment>
<comment type="catalytic activity">
    <reaction evidence="4">
        <text>S-ubiquitinyl-[E1 ubiquitin-activating enzyme]-L-cysteine + [E2 ubiquitin-conjugating enzyme]-L-cysteine = [E1 ubiquitin-activating enzyme]-L-cysteine + S-ubiquitinyl-[E2 ubiquitin-conjugating enzyme]-L-cysteine.</text>
        <dbReference type="EC" id="2.3.2.23"/>
    </reaction>
</comment>
<comment type="pathway">
    <text evidence="4">Protein modification; protein ubiquitination.</text>
</comment>
<comment type="subcellular location">
    <subcellularLocation>
        <location evidence="5">Peroxisome membrane</location>
        <topology evidence="5">Peripheral membrane protein</topology>
        <orientation evidence="5">Cytoplasmic side</orientation>
    </subcellularLocation>
</comment>
<comment type="disruption phenotype">
    <text evidence="3">Still contains peroxisomal membrane protein-containing peroxisomes that import residual amounts of peroxisomal matrix proteins.</text>
</comment>
<comment type="similarity">
    <text evidence="8">Belongs to the ubiquitin-conjugating enzyme family.</text>
</comment>
<name>PEX4_KOMPG</name>